<evidence type="ECO:0000255" key="1"/>
<evidence type="ECO:0000269" key="2">
    <source>
    </source>
</evidence>
<evidence type="ECO:0000269" key="3">
    <source>
    </source>
</evidence>
<evidence type="ECO:0000269" key="4">
    <source>
    </source>
</evidence>
<evidence type="ECO:0000269" key="5">
    <source>
    </source>
</evidence>
<evidence type="ECO:0000305" key="6"/>
<name>STP4_ARATH</name>
<gene>
    <name type="primary">STP4</name>
    <name type="ordered locus">At3g19930</name>
    <name type="ORF">MPN9.17</name>
</gene>
<comment type="function">
    <text evidence="5">Mediates an active uptake of hexoses, probably by sugar/hydrogen symport. Can transport glucose, methylglucose, galactose, xylose and mannose, but not fructose.</text>
</comment>
<comment type="biophysicochemical properties">
    <kinetics>
        <KM>15 uM for glucose</KM>
        <KM>100 uM for 3-O-methylglucose</KM>
    </kinetics>
</comment>
<comment type="subcellular location">
    <subcellularLocation>
        <location evidence="4">Cell membrane</location>
        <topology evidence="1">Multi-pass membrane protein</topology>
    </subcellularLocation>
</comment>
<comment type="tissue specificity">
    <text evidence="3 5">Mostly in flowers and roots, especially in anthers, including pollen, and root tips. Also present in some hydathodes.</text>
</comment>
<comment type="induction">
    <text evidence="2 3 5">Induced locally by wounding, elicitors such as chitin, bacterial pathogens such as P.syringae, compatible fungal pathogens such as A.brassicicola, E.cichoracearum and F.oxysporum, and incompatible fungal pathogens such as B.graminis. Also induced by aphid feeding.</text>
</comment>
<comment type="similarity">
    <text evidence="6">Belongs to the major facilitator superfamily. Sugar transporter (TC 2.A.1.1) family.</text>
</comment>
<dbReference type="EMBL" id="X66857">
    <property type="protein sequence ID" value="CAA47325.1"/>
    <property type="molecule type" value="mRNA"/>
</dbReference>
<dbReference type="EMBL" id="AB025631">
    <property type="protein sequence ID" value="BAB01308.1"/>
    <property type="molecule type" value="Genomic_DNA"/>
</dbReference>
<dbReference type="EMBL" id="CP002686">
    <property type="protein sequence ID" value="AEE76309.1"/>
    <property type="molecule type" value="Genomic_DNA"/>
</dbReference>
<dbReference type="EMBL" id="CP002686">
    <property type="protein sequence ID" value="ANM64813.1"/>
    <property type="molecule type" value="Genomic_DNA"/>
</dbReference>
<dbReference type="EMBL" id="AF367352">
    <property type="protein sequence ID" value="AAK32938.1"/>
    <property type="molecule type" value="mRNA"/>
</dbReference>
<dbReference type="EMBL" id="AF428342">
    <property type="protein sequence ID" value="AAL16272.1"/>
    <property type="molecule type" value="mRNA"/>
</dbReference>
<dbReference type="EMBL" id="AY133592">
    <property type="protein sequence ID" value="AAM91422.1"/>
    <property type="molecule type" value="mRNA"/>
</dbReference>
<dbReference type="EMBL" id="AK220712">
    <property type="protein sequence ID" value="BAD93826.1"/>
    <property type="molecule type" value="mRNA"/>
</dbReference>
<dbReference type="PIR" id="S25009">
    <property type="entry name" value="S25009"/>
</dbReference>
<dbReference type="RefSeq" id="NP_001326818.1">
    <property type="nucleotide sequence ID" value="NM_001338428.1"/>
</dbReference>
<dbReference type="RefSeq" id="NP_188627.1">
    <property type="nucleotide sequence ID" value="NM_112883.5"/>
</dbReference>
<dbReference type="SMR" id="Q39228"/>
<dbReference type="BioGRID" id="6863">
    <property type="interactions" value="24"/>
</dbReference>
<dbReference type="FunCoup" id="Q39228">
    <property type="interactions" value="277"/>
</dbReference>
<dbReference type="IntAct" id="Q39228">
    <property type="interactions" value="18"/>
</dbReference>
<dbReference type="STRING" id="3702.Q39228"/>
<dbReference type="TCDB" id="2.A.1.1.49">
    <property type="family name" value="the major facilitator superfamily (mfs)"/>
</dbReference>
<dbReference type="PaxDb" id="3702-AT3G19930.1"/>
<dbReference type="ProteomicsDB" id="245221"/>
<dbReference type="EnsemblPlants" id="AT3G19930.1">
    <property type="protein sequence ID" value="AT3G19930.1"/>
    <property type="gene ID" value="AT3G19930"/>
</dbReference>
<dbReference type="EnsemblPlants" id="AT3G19930.2">
    <property type="protein sequence ID" value="AT3G19930.2"/>
    <property type="gene ID" value="AT3G19930"/>
</dbReference>
<dbReference type="GeneID" id="821531"/>
<dbReference type="Gramene" id="AT3G19930.1">
    <property type="protein sequence ID" value="AT3G19930.1"/>
    <property type="gene ID" value="AT3G19930"/>
</dbReference>
<dbReference type="Gramene" id="AT3G19930.2">
    <property type="protein sequence ID" value="AT3G19930.2"/>
    <property type="gene ID" value="AT3G19930"/>
</dbReference>
<dbReference type="KEGG" id="ath:AT3G19930"/>
<dbReference type="Araport" id="AT3G19930"/>
<dbReference type="TAIR" id="AT3G19930">
    <property type="gene designation" value="STP4"/>
</dbReference>
<dbReference type="eggNOG" id="KOG0254">
    <property type="taxonomic scope" value="Eukaryota"/>
</dbReference>
<dbReference type="HOGENOM" id="CLU_001265_30_5_1"/>
<dbReference type="InParanoid" id="Q39228"/>
<dbReference type="OMA" id="AGWTVIM"/>
<dbReference type="OrthoDB" id="5296287at2759"/>
<dbReference type="PhylomeDB" id="Q39228"/>
<dbReference type="PRO" id="PR:Q39228"/>
<dbReference type="Proteomes" id="UP000006548">
    <property type="component" value="Chromosome 3"/>
</dbReference>
<dbReference type="ExpressionAtlas" id="Q39228">
    <property type="expression patterns" value="baseline and differential"/>
</dbReference>
<dbReference type="GO" id="GO:0005886">
    <property type="term" value="C:plasma membrane"/>
    <property type="evidence" value="ECO:0000314"/>
    <property type="project" value="TAIR"/>
</dbReference>
<dbReference type="GO" id="GO:0015145">
    <property type="term" value="F:monosaccharide transmembrane transporter activity"/>
    <property type="evidence" value="ECO:0000314"/>
    <property type="project" value="TAIR"/>
</dbReference>
<dbReference type="GO" id="GO:0008506">
    <property type="term" value="F:sucrose:proton symporter activity"/>
    <property type="evidence" value="ECO:0000314"/>
    <property type="project" value="TAIR"/>
</dbReference>
<dbReference type="GO" id="GO:0015770">
    <property type="term" value="P:sucrose transport"/>
    <property type="evidence" value="ECO:0000304"/>
    <property type="project" value="TAIR"/>
</dbReference>
<dbReference type="CDD" id="cd17361">
    <property type="entry name" value="MFS_STP"/>
    <property type="match status" value="1"/>
</dbReference>
<dbReference type="FunFam" id="1.20.1250.20:FF:000002">
    <property type="entry name" value="Sugar transport protein 13"/>
    <property type="match status" value="1"/>
</dbReference>
<dbReference type="Gene3D" id="1.20.1250.20">
    <property type="entry name" value="MFS general substrate transporter like domains"/>
    <property type="match status" value="1"/>
</dbReference>
<dbReference type="InterPro" id="IPR020846">
    <property type="entry name" value="MFS_dom"/>
</dbReference>
<dbReference type="InterPro" id="IPR044778">
    <property type="entry name" value="MFS_STP/MST-like_plant"/>
</dbReference>
<dbReference type="InterPro" id="IPR005828">
    <property type="entry name" value="MFS_sugar_transport-like"/>
</dbReference>
<dbReference type="InterPro" id="IPR036259">
    <property type="entry name" value="MFS_trans_sf"/>
</dbReference>
<dbReference type="InterPro" id="IPR045262">
    <property type="entry name" value="STP/PLT_plant"/>
</dbReference>
<dbReference type="InterPro" id="IPR003663">
    <property type="entry name" value="Sugar/inositol_transpt"/>
</dbReference>
<dbReference type="InterPro" id="IPR005829">
    <property type="entry name" value="Sugar_transporter_CS"/>
</dbReference>
<dbReference type="NCBIfam" id="TIGR00879">
    <property type="entry name" value="SP"/>
    <property type="match status" value="1"/>
</dbReference>
<dbReference type="PANTHER" id="PTHR23500">
    <property type="entry name" value="SOLUTE CARRIER FAMILY 2, FACILITATED GLUCOSE TRANSPORTER"/>
    <property type="match status" value="1"/>
</dbReference>
<dbReference type="PANTHER" id="PTHR23500:SF569">
    <property type="entry name" value="SUGAR TRANSPORT PROTEIN 4"/>
    <property type="match status" value="1"/>
</dbReference>
<dbReference type="Pfam" id="PF00083">
    <property type="entry name" value="Sugar_tr"/>
    <property type="match status" value="1"/>
</dbReference>
<dbReference type="PRINTS" id="PR00171">
    <property type="entry name" value="SUGRTRNSPORT"/>
</dbReference>
<dbReference type="SUPFAM" id="SSF103473">
    <property type="entry name" value="MFS general substrate transporter"/>
    <property type="match status" value="1"/>
</dbReference>
<dbReference type="PROSITE" id="PS50850">
    <property type="entry name" value="MFS"/>
    <property type="match status" value="1"/>
</dbReference>
<dbReference type="PROSITE" id="PS00216">
    <property type="entry name" value="SUGAR_TRANSPORT_1"/>
    <property type="match status" value="1"/>
</dbReference>
<dbReference type="PROSITE" id="PS00217">
    <property type="entry name" value="SUGAR_TRANSPORT_2"/>
    <property type="match status" value="1"/>
</dbReference>
<reference key="1">
    <citation type="journal article" date="1996" name="Plant Cell">
        <title>The sink-specific and stress-regulated Arabidopsis STP4 gene: enhanced expression of a gene encoding a monosaccharide transporter by wounding, elicitors, and pathogen challenge.</title>
        <authorList>
            <person name="Truernit E."/>
            <person name="Schmid J."/>
            <person name="Epple P."/>
            <person name="Illig J."/>
            <person name="Sauer N."/>
        </authorList>
    </citation>
    <scope>NUCLEOTIDE SEQUENCE [MRNA]</scope>
    <scope>FUNCTION</scope>
    <scope>TISSUE SPECIFICITY</scope>
    <scope>INDUCTION</scope>
</reference>
<reference key="2">
    <citation type="journal article" date="2000" name="DNA Res.">
        <title>Structural analysis of Arabidopsis thaliana chromosome 3. I. Sequence features of the regions of 4,504,864 bp covered by sixty P1 and TAC clones.</title>
        <authorList>
            <person name="Sato S."/>
            <person name="Nakamura Y."/>
            <person name="Kaneko T."/>
            <person name="Katoh T."/>
            <person name="Asamizu E."/>
            <person name="Tabata S."/>
        </authorList>
    </citation>
    <scope>NUCLEOTIDE SEQUENCE [LARGE SCALE GENOMIC DNA]</scope>
    <source>
        <strain>cv. Columbia</strain>
    </source>
</reference>
<reference key="3">
    <citation type="journal article" date="2017" name="Plant J.">
        <title>Araport11: a complete reannotation of the Arabidopsis thaliana reference genome.</title>
        <authorList>
            <person name="Cheng C.Y."/>
            <person name="Krishnakumar V."/>
            <person name="Chan A.P."/>
            <person name="Thibaud-Nissen F."/>
            <person name="Schobel S."/>
            <person name="Town C.D."/>
        </authorList>
    </citation>
    <scope>GENOME REANNOTATION</scope>
    <source>
        <strain>cv. Columbia</strain>
    </source>
</reference>
<reference key="4">
    <citation type="journal article" date="2003" name="Science">
        <title>Empirical analysis of transcriptional activity in the Arabidopsis genome.</title>
        <authorList>
            <person name="Yamada K."/>
            <person name="Lim J."/>
            <person name="Dale J.M."/>
            <person name="Chen H."/>
            <person name="Shinn P."/>
            <person name="Palm C.J."/>
            <person name="Southwick A.M."/>
            <person name="Wu H.C."/>
            <person name="Kim C.J."/>
            <person name="Nguyen M."/>
            <person name="Pham P.K."/>
            <person name="Cheuk R.F."/>
            <person name="Karlin-Newmann G."/>
            <person name="Liu S.X."/>
            <person name="Lam B."/>
            <person name="Sakano H."/>
            <person name="Wu T."/>
            <person name="Yu G."/>
            <person name="Miranda M."/>
            <person name="Quach H.L."/>
            <person name="Tripp M."/>
            <person name="Chang C.H."/>
            <person name="Lee J.M."/>
            <person name="Toriumi M.J."/>
            <person name="Chan M.M."/>
            <person name="Tang C.C."/>
            <person name="Onodera C.S."/>
            <person name="Deng J.M."/>
            <person name="Akiyama K."/>
            <person name="Ansari Y."/>
            <person name="Arakawa T."/>
            <person name="Banh J."/>
            <person name="Banno F."/>
            <person name="Bowser L."/>
            <person name="Brooks S.Y."/>
            <person name="Carninci P."/>
            <person name="Chao Q."/>
            <person name="Choy N."/>
            <person name="Enju A."/>
            <person name="Goldsmith A.D."/>
            <person name="Gurjal M."/>
            <person name="Hansen N.F."/>
            <person name="Hayashizaki Y."/>
            <person name="Johnson-Hopson C."/>
            <person name="Hsuan V.W."/>
            <person name="Iida K."/>
            <person name="Karnes M."/>
            <person name="Khan S."/>
            <person name="Koesema E."/>
            <person name="Ishida J."/>
            <person name="Jiang P.X."/>
            <person name="Jones T."/>
            <person name="Kawai J."/>
            <person name="Kamiya A."/>
            <person name="Meyers C."/>
            <person name="Nakajima M."/>
            <person name="Narusaka M."/>
            <person name="Seki M."/>
            <person name="Sakurai T."/>
            <person name="Satou M."/>
            <person name="Tamse R."/>
            <person name="Vaysberg M."/>
            <person name="Wallender E.K."/>
            <person name="Wong C."/>
            <person name="Yamamura Y."/>
            <person name="Yuan S."/>
            <person name="Shinozaki K."/>
            <person name="Davis R.W."/>
            <person name="Theologis A."/>
            <person name="Ecker J.R."/>
        </authorList>
    </citation>
    <scope>NUCLEOTIDE SEQUENCE [LARGE SCALE MRNA]</scope>
    <source>
        <strain>cv. Columbia</strain>
    </source>
</reference>
<reference key="5">
    <citation type="submission" date="2005-03" db="EMBL/GenBank/DDBJ databases">
        <title>Large-scale analysis of RIKEN Arabidopsis full-length (RAFL) cDNAs.</title>
        <authorList>
            <person name="Totoki Y."/>
            <person name="Seki M."/>
            <person name="Ishida J."/>
            <person name="Nakajima M."/>
            <person name="Enju A."/>
            <person name="Kamiya A."/>
            <person name="Narusaka M."/>
            <person name="Shin-i T."/>
            <person name="Nakagawa M."/>
            <person name="Sakamoto N."/>
            <person name="Oishi K."/>
            <person name="Kohara Y."/>
            <person name="Kobayashi M."/>
            <person name="Toyoda A."/>
            <person name="Sakaki Y."/>
            <person name="Sakurai T."/>
            <person name="Iida K."/>
            <person name="Akiyama K."/>
            <person name="Satou M."/>
            <person name="Toyoda T."/>
            <person name="Konagaya A."/>
            <person name="Carninci P."/>
            <person name="Kawai J."/>
            <person name="Hayashizaki Y."/>
            <person name="Shinozaki K."/>
        </authorList>
    </citation>
    <scope>NUCLEOTIDE SEQUENCE [LARGE SCALE MRNA] OF 430-514</scope>
    <source>
        <strain>cv. Columbia</strain>
    </source>
</reference>
<reference key="6">
    <citation type="journal article" date="2001" name="Plant Physiol.">
        <title>Molecular responses to aphid feeding in Arabidopsis in relation to plant defense pathways.</title>
        <authorList>
            <person name="Moran P.J."/>
            <person name="Thompson G.A."/>
        </authorList>
    </citation>
    <scope>INDUCTION</scope>
</reference>
<reference key="7">
    <citation type="journal article" date="2003" name="Plant Physiol.">
        <title>The monosaccharide transporter gene, AtSTP4, and the cell-wall invertase, Atbetafruct1, are induced in Arabidopsis during infection with the fungal biotroph Erysiphe cichoracearum.</title>
        <authorList>
            <person name="Fotopoulos V."/>
            <person name="Gilbert M.J."/>
            <person name="Pittman J.K."/>
            <person name="Marvier A.C."/>
            <person name="Buchanan A.J."/>
            <person name="Sauer N."/>
            <person name="Hall J.L."/>
            <person name="Williams L.E."/>
        </authorList>
    </citation>
    <scope>INDUCTION</scope>
    <scope>TISSUE SPECIFICITY</scope>
</reference>
<reference key="8">
    <citation type="journal article" date="2004" name="Mol. Cell. Proteomics">
        <title>Identification of new intrinsic proteins in Arabidopsis plasma membrane proteome.</title>
        <authorList>
            <person name="Marmagne A."/>
            <person name="Rouet M.-A."/>
            <person name="Ferro M."/>
            <person name="Rolland N."/>
            <person name="Alcon C."/>
            <person name="Joyard J."/>
            <person name="Garin J."/>
            <person name="Barbier-Brygoo H."/>
            <person name="Ephritikhine G."/>
        </authorList>
    </citation>
    <scope>IDENTIFICATION BY MASS SPECTROMETRY</scope>
    <scope>SUBCELLULAR LOCATION [LARGE SCALE ANALYSIS]</scope>
</reference>
<reference key="9">
    <citation type="journal article" date="2006" name="BMC Evol. Biol.">
        <title>The monosaccharide transporter gene family in land plants is ancient and shows differential subfamily expression and expansion across lineages.</title>
        <authorList>
            <person name="Johnson D.A."/>
            <person name="Hill J.P."/>
            <person name="Thomas M.A."/>
        </authorList>
    </citation>
    <scope>GENE FAMILY</scope>
</reference>
<protein>
    <recommendedName>
        <fullName>Sugar transport protein 4</fullName>
    </recommendedName>
    <alternativeName>
        <fullName>Hexose transporter 4</fullName>
    </alternativeName>
</protein>
<organism>
    <name type="scientific">Arabidopsis thaliana</name>
    <name type="common">Mouse-ear cress</name>
    <dbReference type="NCBI Taxonomy" id="3702"/>
    <lineage>
        <taxon>Eukaryota</taxon>
        <taxon>Viridiplantae</taxon>
        <taxon>Streptophyta</taxon>
        <taxon>Embryophyta</taxon>
        <taxon>Tracheophyta</taxon>
        <taxon>Spermatophyta</taxon>
        <taxon>Magnoliopsida</taxon>
        <taxon>eudicotyledons</taxon>
        <taxon>Gunneridae</taxon>
        <taxon>Pentapetalae</taxon>
        <taxon>rosids</taxon>
        <taxon>malvids</taxon>
        <taxon>Brassicales</taxon>
        <taxon>Brassicaceae</taxon>
        <taxon>Camelineae</taxon>
        <taxon>Arabidopsis</taxon>
    </lineage>
</organism>
<accession>Q39228</accession>
<accession>Q570J6</accession>
<proteinExistence type="evidence at protein level"/>
<sequence length="514" mass="57095">MAGGFVSQTPGVRNYNYKLTPKVFVTCFIGAFGGLIFGYDLGISGGVTSMEPFLEEFFPYVYKKMKSAHENEYCRFDSQLLTLFTSSLYVAALVSSLFASTITRVFGRKWSMFLGGFTFFIGSAFNGFAQNIAMLLIGRILLGFGVGFANQSVPVYLSEMAPPNLRGAFNNGFQVAIIFGIVVATIINYFTAQMKGNIGWRISLGLACVPAVMIMIGALILPDTPNSLIERGYTEEAKEMLQSIRGTNEVDEEFQDLIDASEESKQVKHPWKNIMLPRYRPQLIMTCFIPFFQQLTGINVITFYAPVLFQTLGFGSKASLLSAMVTGIIELLCTFVSVFTVDRFGRRILFLQGGIQMLVSQIAIGAMIGVKFGVAGTGNIGKSDANLIVALICIYVAGFAWSWGPLGWLVPSEISPLEIRSAAQAINVSVNMFFTFLVAQLFLTMLCHMKFGLFFFFAFFVVIMTIFIYLMLPETKNVPIEEMNRVWKAHWFWGKFIPDEAVNMGAAEMQQKSV</sequence>
<feature type="chain" id="PRO_0000050434" description="Sugar transport protein 4">
    <location>
        <begin position="1"/>
        <end position="514"/>
    </location>
</feature>
<feature type="topological domain" description="Cytoplasmic" evidence="1">
    <location>
        <begin position="1"/>
        <end position="22"/>
    </location>
</feature>
<feature type="transmembrane region" description="Helical; Name=1" evidence="1">
    <location>
        <begin position="23"/>
        <end position="43"/>
    </location>
</feature>
<feature type="transmembrane region" description="Helical; Name=2" evidence="1">
    <location>
        <begin position="80"/>
        <end position="100"/>
    </location>
</feature>
<feature type="transmembrane region" description="Helical; Name=3" evidence="1">
    <location>
        <begin position="117"/>
        <end position="137"/>
    </location>
</feature>
<feature type="transmembrane region" description="Helical; Name=4" evidence="1">
    <location>
        <begin position="140"/>
        <end position="160"/>
    </location>
</feature>
<feature type="transmembrane region" description="Helical; Name=5" evidence="1">
    <location>
        <begin position="172"/>
        <end position="192"/>
    </location>
</feature>
<feature type="transmembrane region" description="Helical; Name=6" evidence="1">
    <location>
        <begin position="202"/>
        <end position="222"/>
    </location>
</feature>
<feature type="transmembrane region" description="Helical; Name=7" evidence="1">
    <location>
        <begin position="283"/>
        <end position="303"/>
    </location>
</feature>
<feature type="transmembrane region" description="Helical; Name=8" evidence="1">
    <location>
        <begin position="321"/>
        <end position="341"/>
    </location>
</feature>
<feature type="transmembrane region" description="Helical; Name=9" evidence="1">
    <location>
        <begin position="348"/>
        <end position="368"/>
    </location>
</feature>
<feature type="transmembrane region" description="Helical; Name=10" evidence="1">
    <location>
        <begin position="387"/>
        <end position="407"/>
    </location>
</feature>
<feature type="transmembrane region" description="Helical; Name=11" evidence="1">
    <location>
        <begin position="426"/>
        <end position="446"/>
    </location>
</feature>
<feature type="transmembrane region" description="Helical; Name=12" evidence="1">
    <location>
        <begin position="451"/>
        <end position="471"/>
    </location>
</feature>
<feature type="topological domain" description="Cytoplasmic" evidence="1">
    <location>
        <begin position="472"/>
        <end position="514"/>
    </location>
</feature>
<keyword id="KW-1003">Cell membrane</keyword>
<keyword id="KW-0472">Membrane</keyword>
<keyword id="KW-1185">Reference proteome</keyword>
<keyword id="KW-0762">Sugar transport</keyword>
<keyword id="KW-0769">Symport</keyword>
<keyword id="KW-0812">Transmembrane</keyword>
<keyword id="KW-1133">Transmembrane helix</keyword>
<keyword id="KW-0813">Transport</keyword>